<proteinExistence type="inferred from homology"/>
<organism>
    <name type="scientific">Bacillus velezensis (strain DSM 23117 / BGSC 10A6 / LMG 26770 / FZB42)</name>
    <name type="common">Bacillus amyloliquefaciens subsp. plantarum</name>
    <dbReference type="NCBI Taxonomy" id="326423"/>
    <lineage>
        <taxon>Bacteria</taxon>
        <taxon>Bacillati</taxon>
        <taxon>Bacillota</taxon>
        <taxon>Bacilli</taxon>
        <taxon>Bacillales</taxon>
        <taxon>Bacillaceae</taxon>
        <taxon>Bacillus</taxon>
        <taxon>Bacillus amyloliquefaciens group</taxon>
    </lineage>
</organism>
<evidence type="ECO:0000255" key="1">
    <source>
        <dbReference type="HAMAP-Rule" id="MF_01633"/>
    </source>
</evidence>
<evidence type="ECO:0000305" key="2"/>
<protein>
    <recommendedName>
        <fullName evidence="1">7-cyano-7-deazaguanine synthase</fullName>
        <ecNumber evidence="1">6.3.4.20</ecNumber>
    </recommendedName>
    <alternativeName>
        <fullName evidence="1">7-cyano-7-carbaguanine synthase</fullName>
    </alternativeName>
    <alternativeName>
        <fullName evidence="1">PreQ(0) synthase</fullName>
    </alternativeName>
    <alternativeName>
        <fullName evidence="1">Queuosine biosynthesis protein QueC</fullName>
    </alternativeName>
</protein>
<reference key="1">
    <citation type="journal article" date="2007" name="Nat. Biotechnol.">
        <title>Comparative analysis of the complete genome sequence of the plant growth-promoting bacterium Bacillus amyloliquefaciens FZB42.</title>
        <authorList>
            <person name="Chen X.H."/>
            <person name="Koumoutsi A."/>
            <person name="Scholz R."/>
            <person name="Eisenreich A."/>
            <person name="Schneider K."/>
            <person name="Heinemeyer I."/>
            <person name="Morgenstern B."/>
            <person name="Voss B."/>
            <person name="Hess W.R."/>
            <person name="Reva O."/>
            <person name="Junge H."/>
            <person name="Voigt B."/>
            <person name="Jungblut P.R."/>
            <person name="Vater J."/>
            <person name="Suessmuth R."/>
            <person name="Liesegang H."/>
            <person name="Strittmatter A."/>
            <person name="Gottschalk G."/>
            <person name="Borriss R."/>
        </authorList>
    </citation>
    <scope>NUCLEOTIDE SEQUENCE [LARGE SCALE GENOMIC DNA]</scope>
    <source>
        <strain>DSM 23117 / BGSC 10A6 / LMG 26770 / FZB42</strain>
    </source>
</reference>
<keyword id="KW-0067">ATP-binding</keyword>
<keyword id="KW-0436">Ligase</keyword>
<keyword id="KW-0479">Metal-binding</keyword>
<keyword id="KW-0547">Nucleotide-binding</keyword>
<keyword id="KW-0671">Queuosine biosynthesis</keyword>
<keyword id="KW-0862">Zinc</keyword>
<feature type="chain" id="PRO_0000336892" description="7-cyano-7-deazaguanine synthase">
    <location>
        <begin position="1"/>
        <end position="219"/>
    </location>
</feature>
<feature type="binding site" evidence="1">
    <location>
        <begin position="10"/>
        <end position="20"/>
    </location>
    <ligand>
        <name>ATP</name>
        <dbReference type="ChEBI" id="CHEBI:30616"/>
    </ligand>
</feature>
<feature type="binding site" evidence="1">
    <location>
        <position position="186"/>
    </location>
    <ligand>
        <name>Zn(2+)</name>
        <dbReference type="ChEBI" id="CHEBI:29105"/>
    </ligand>
</feature>
<feature type="binding site" evidence="1">
    <location>
        <position position="195"/>
    </location>
    <ligand>
        <name>Zn(2+)</name>
        <dbReference type="ChEBI" id="CHEBI:29105"/>
    </ligand>
</feature>
<feature type="binding site" evidence="1">
    <location>
        <position position="198"/>
    </location>
    <ligand>
        <name>Zn(2+)</name>
        <dbReference type="ChEBI" id="CHEBI:29105"/>
    </ligand>
</feature>
<feature type="binding site" evidence="1">
    <location>
        <position position="201"/>
    </location>
    <ligand>
        <name>Zn(2+)</name>
        <dbReference type="ChEBI" id="CHEBI:29105"/>
    </ligand>
</feature>
<sequence length="219" mass="24590">MKKEKAVVVFSGGQDSTTCLLWALQNFEEVETVTFHYNQRHQEEIDVAKSIAEKLGVKNHLLDMSLLNQLAPNALTRDDIEIEAKDGELPTTFVPGRNLVFLSFASILAYQIGARHIITGVCETDFSGYPDCRDEFVKSCNVTVNLAMEKPFVIHTPLMWLNKAETWKLADELGALDFVKNNTLTCYNGIIADGCGECPACLLRNKGYDEYMKMKGERN</sequence>
<comment type="function">
    <text evidence="1">Catalyzes the ATP-dependent conversion of 7-carboxy-7-deazaguanine (CDG) to 7-cyano-7-deazaguanine (preQ(0)).</text>
</comment>
<comment type="catalytic activity">
    <reaction evidence="1">
        <text>7-carboxy-7-deazaguanine + NH4(+) + ATP = 7-cyano-7-deazaguanine + ADP + phosphate + H2O + H(+)</text>
        <dbReference type="Rhea" id="RHEA:27982"/>
        <dbReference type="ChEBI" id="CHEBI:15377"/>
        <dbReference type="ChEBI" id="CHEBI:15378"/>
        <dbReference type="ChEBI" id="CHEBI:28938"/>
        <dbReference type="ChEBI" id="CHEBI:30616"/>
        <dbReference type="ChEBI" id="CHEBI:43474"/>
        <dbReference type="ChEBI" id="CHEBI:45075"/>
        <dbReference type="ChEBI" id="CHEBI:61036"/>
        <dbReference type="ChEBI" id="CHEBI:456216"/>
        <dbReference type="EC" id="6.3.4.20"/>
    </reaction>
</comment>
<comment type="cofactor">
    <cofactor evidence="1">
        <name>Zn(2+)</name>
        <dbReference type="ChEBI" id="CHEBI:29105"/>
    </cofactor>
    <text evidence="1">Binds 1 zinc ion per subunit.</text>
</comment>
<comment type="pathway">
    <text evidence="1">Purine metabolism; 7-cyano-7-deazaguanine biosynthesis.</text>
</comment>
<comment type="subunit">
    <text evidence="1">Homodimer.</text>
</comment>
<comment type="similarity">
    <text evidence="1">Belongs to the QueC family.</text>
</comment>
<comment type="sequence caution" evidence="2">
    <conflict type="erroneous initiation">
        <sequence resource="EMBL-CDS" id="ABS73712"/>
    </conflict>
</comment>
<accession>A7Z3Y6</accession>
<dbReference type="EC" id="6.3.4.20" evidence="1"/>
<dbReference type="EMBL" id="CP000560">
    <property type="protein sequence ID" value="ABS73712.1"/>
    <property type="status" value="ALT_INIT"/>
    <property type="molecule type" value="Genomic_DNA"/>
</dbReference>
<dbReference type="RefSeq" id="WP_003154679.1">
    <property type="nucleotide sequence ID" value="NC_009725.2"/>
</dbReference>
<dbReference type="SMR" id="A7Z3Y6"/>
<dbReference type="GeneID" id="93080484"/>
<dbReference type="KEGG" id="bay:RBAM_013490"/>
<dbReference type="HOGENOM" id="CLU_081854_0_0_9"/>
<dbReference type="UniPathway" id="UPA00391"/>
<dbReference type="Proteomes" id="UP000001120">
    <property type="component" value="Chromosome"/>
</dbReference>
<dbReference type="GO" id="GO:0005524">
    <property type="term" value="F:ATP binding"/>
    <property type="evidence" value="ECO:0007669"/>
    <property type="project" value="UniProtKB-UniRule"/>
</dbReference>
<dbReference type="GO" id="GO:0016879">
    <property type="term" value="F:ligase activity, forming carbon-nitrogen bonds"/>
    <property type="evidence" value="ECO:0007669"/>
    <property type="project" value="UniProtKB-UniRule"/>
</dbReference>
<dbReference type="GO" id="GO:0008270">
    <property type="term" value="F:zinc ion binding"/>
    <property type="evidence" value="ECO:0007669"/>
    <property type="project" value="UniProtKB-UniRule"/>
</dbReference>
<dbReference type="GO" id="GO:0008616">
    <property type="term" value="P:queuosine biosynthetic process"/>
    <property type="evidence" value="ECO:0007669"/>
    <property type="project" value="UniProtKB-UniRule"/>
</dbReference>
<dbReference type="CDD" id="cd01995">
    <property type="entry name" value="QueC-like"/>
    <property type="match status" value="1"/>
</dbReference>
<dbReference type="FunFam" id="3.40.50.620:FF:000017">
    <property type="entry name" value="7-cyano-7-deazaguanine synthase"/>
    <property type="match status" value="1"/>
</dbReference>
<dbReference type="Gene3D" id="3.40.50.620">
    <property type="entry name" value="HUPs"/>
    <property type="match status" value="1"/>
</dbReference>
<dbReference type="HAMAP" id="MF_01633">
    <property type="entry name" value="QueC"/>
    <property type="match status" value="1"/>
</dbReference>
<dbReference type="InterPro" id="IPR018317">
    <property type="entry name" value="QueC"/>
</dbReference>
<dbReference type="InterPro" id="IPR014729">
    <property type="entry name" value="Rossmann-like_a/b/a_fold"/>
</dbReference>
<dbReference type="NCBIfam" id="TIGR00364">
    <property type="entry name" value="7-cyano-7-deazaguanine synthase QueC"/>
    <property type="match status" value="1"/>
</dbReference>
<dbReference type="PANTHER" id="PTHR42914">
    <property type="entry name" value="7-CYANO-7-DEAZAGUANINE SYNTHASE"/>
    <property type="match status" value="1"/>
</dbReference>
<dbReference type="PANTHER" id="PTHR42914:SF1">
    <property type="entry name" value="7-CYANO-7-DEAZAGUANINE SYNTHASE"/>
    <property type="match status" value="1"/>
</dbReference>
<dbReference type="Pfam" id="PF06508">
    <property type="entry name" value="QueC"/>
    <property type="match status" value="1"/>
</dbReference>
<dbReference type="PIRSF" id="PIRSF006293">
    <property type="entry name" value="ExsB"/>
    <property type="match status" value="1"/>
</dbReference>
<dbReference type="SUPFAM" id="SSF52402">
    <property type="entry name" value="Adenine nucleotide alpha hydrolases-like"/>
    <property type="match status" value="1"/>
</dbReference>
<gene>
    <name evidence="1" type="primary">queC</name>
    <name type="ordered locus">RBAM_013490</name>
</gene>
<name>QUEC_BACVZ</name>